<organism>
    <name type="scientific">Borrelia duttonii (strain Ly)</name>
    <dbReference type="NCBI Taxonomy" id="412419"/>
    <lineage>
        <taxon>Bacteria</taxon>
        <taxon>Pseudomonadati</taxon>
        <taxon>Spirochaetota</taxon>
        <taxon>Spirochaetia</taxon>
        <taxon>Spirochaetales</taxon>
        <taxon>Borreliaceae</taxon>
        <taxon>Borrelia</taxon>
    </lineage>
</organism>
<reference key="1">
    <citation type="journal article" date="2008" name="PLoS Genet.">
        <title>The genome of Borrelia recurrentis, the agent of deadly louse-borne relapsing fever, is a degraded subset of tick-borne Borrelia duttonii.</title>
        <authorList>
            <person name="Lescot M."/>
            <person name="Audic S."/>
            <person name="Robert C."/>
            <person name="Nguyen T.T."/>
            <person name="Blanc G."/>
            <person name="Cutler S.J."/>
            <person name="Wincker P."/>
            <person name="Couloux A."/>
            <person name="Claverie J.-M."/>
            <person name="Raoult D."/>
            <person name="Drancourt M."/>
        </authorList>
    </citation>
    <scope>NUCLEOTIDE SEQUENCE [LARGE SCALE GENOMIC DNA]</scope>
    <source>
        <strain>Ly</strain>
    </source>
</reference>
<evidence type="ECO:0000255" key="1">
    <source>
        <dbReference type="HAMAP-Rule" id="MF_00238"/>
    </source>
</evidence>
<comment type="catalytic activity">
    <reaction evidence="1">
        <text>CMP + ATP = CDP + ADP</text>
        <dbReference type="Rhea" id="RHEA:11600"/>
        <dbReference type="ChEBI" id="CHEBI:30616"/>
        <dbReference type="ChEBI" id="CHEBI:58069"/>
        <dbReference type="ChEBI" id="CHEBI:60377"/>
        <dbReference type="ChEBI" id="CHEBI:456216"/>
        <dbReference type="EC" id="2.7.4.25"/>
    </reaction>
</comment>
<comment type="catalytic activity">
    <reaction evidence="1">
        <text>dCMP + ATP = dCDP + ADP</text>
        <dbReference type="Rhea" id="RHEA:25094"/>
        <dbReference type="ChEBI" id="CHEBI:30616"/>
        <dbReference type="ChEBI" id="CHEBI:57566"/>
        <dbReference type="ChEBI" id="CHEBI:58593"/>
        <dbReference type="ChEBI" id="CHEBI:456216"/>
        <dbReference type="EC" id="2.7.4.25"/>
    </reaction>
</comment>
<comment type="subcellular location">
    <subcellularLocation>
        <location evidence="1">Cytoplasm</location>
    </subcellularLocation>
</comment>
<comment type="similarity">
    <text evidence="1">Belongs to the cytidylate kinase family. Type 1 subfamily.</text>
</comment>
<protein>
    <recommendedName>
        <fullName evidence="1">Cytidylate kinase</fullName>
        <shortName evidence="1">CK</shortName>
        <ecNumber evidence="1">2.7.4.25</ecNumber>
    </recommendedName>
    <alternativeName>
        <fullName evidence="1">Cytidine monophosphate kinase</fullName>
        <shortName evidence="1">CMP kinase</shortName>
    </alternativeName>
</protein>
<name>KCY_BORDL</name>
<accession>B5RLK3</accession>
<keyword id="KW-0067">ATP-binding</keyword>
<keyword id="KW-0963">Cytoplasm</keyword>
<keyword id="KW-0418">Kinase</keyword>
<keyword id="KW-0547">Nucleotide-binding</keyword>
<keyword id="KW-0808">Transferase</keyword>
<sequence>MIIAIDGPSASGKSSVSKALSMKLGFKFISSGYLYRIITLIAQRFTLNEYDLLNESKLVDLISQNDIKYNDNSFLLNGVDVISHILTEKIDFQVSLYSSYVNIRKIVNKKLREIVKIQDDDYIIEGRDITTVVFPEAKIKIYLDASVEVRTLRRYNQRDDDMALIELEQALEKRDEIDQNKEYGKLKLGKGVFYIDTSYKSLDDVCDIIIKTFNLKKK</sequence>
<proteinExistence type="inferred from homology"/>
<feature type="chain" id="PRO_1000100646" description="Cytidylate kinase">
    <location>
        <begin position="1"/>
        <end position="218"/>
    </location>
</feature>
<feature type="binding site" evidence="1">
    <location>
        <begin position="7"/>
        <end position="15"/>
    </location>
    <ligand>
        <name>ATP</name>
        <dbReference type="ChEBI" id="CHEBI:30616"/>
    </ligand>
</feature>
<dbReference type="EC" id="2.7.4.25" evidence="1"/>
<dbReference type="EMBL" id="CP000976">
    <property type="protein sequence ID" value="ACH93088.1"/>
    <property type="molecule type" value="Genomic_DNA"/>
</dbReference>
<dbReference type="RefSeq" id="WP_012537900.1">
    <property type="nucleotide sequence ID" value="NC_011229.1"/>
</dbReference>
<dbReference type="SMR" id="B5RLK3"/>
<dbReference type="STRING" id="412419.BDU_132"/>
<dbReference type="KEGG" id="bdu:BDU_132"/>
<dbReference type="eggNOG" id="COG0283">
    <property type="taxonomic scope" value="Bacteria"/>
</dbReference>
<dbReference type="HOGENOM" id="CLU_079959_0_2_12"/>
<dbReference type="OrthoDB" id="9807434at2"/>
<dbReference type="Proteomes" id="UP000000611">
    <property type="component" value="Chromosome"/>
</dbReference>
<dbReference type="GO" id="GO:0005737">
    <property type="term" value="C:cytoplasm"/>
    <property type="evidence" value="ECO:0007669"/>
    <property type="project" value="UniProtKB-SubCell"/>
</dbReference>
<dbReference type="GO" id="GO:0005524">
    <property type="term" value="F:ATP binding"/>
    <property type="evidence" value="ECO:0007669"/>
    <property type="project" value="UniProtKB-UniRule"/>
</dbReference>
<dbReference type="GO" id="GO:0036430">
    <property type="term" value="F:CMP kinase activity"/>
    <property type="evidence" value="ECO:0007669"/>
    <property type="project" value="RHEA"/>
</dbReference>
<dbReference type="GO" id="GO:0036431">
    <property type="term" value="F:dCMP kinase activity"/>
    <property type="evidence" value="ECO:0007669"/>
    <property type="project" value="RHEA"/>
</dbReference>
<dbReference type="GO" id="GO:0006220">
    <property type="term" value="P:pyrimidine nucleotide metabolic process"/>
    <property type="evidence" value="ECO:0007669"/>
    <property type="project" value="UniProtKB-UniRule"/>
</dbReference>
<dbReference type="CDD" id="cd02020">
    <property type="entry name" value="CMPK"/>
    <property type="match status" value="1"/>
</dbReference>
<dbReference type="Gene3D" id="3.40.50.300">
    <property type="entry name" value="P-loop containing nucleotide triphosphate hydrolases"/>
    <property type="match status" value="1"/>
</dbReference>
<dbReference type="HAMAP" id="MF_00238">
    <property type="entry name" value="Cytidyl_kinase_type1"/>
    <property type="match status" value="1"/>
</dbReference>
<dbReference type="InterPro" id="IPR003136">
    <property type="entry name" value="Cytidylate_kin"/>
</dbReference>
<dbReference type="InterPro" id="IPR011994">
    <property type="entry name" value="Cytidylate_kinase_dom"/>
</dbReference>
<dbReference type="InterPro" id="IPR027417">
    <property type="entry name" value="P-loop_NTPase"/>
</dbReference>
<dbReference type="NCBIfam" id="TIGR00017">
    <property type="entry name" value="cmk"/>
    <property type="match status" value="1"/>
</dbReference>
<dbReference type="Pfam" id="PF02224">
    <property type="entry name" value="Cytidylate_kin"/>
    <property type="match status" value="1"/>
</dbReference>
<dbReference type="SUPFAM" id="SSF52540">
    <property type="entry name" value="P-loop containing nucleoside triphosphate hydrolases"/>
    <property type="match status" value="1"/>
</dbReference>
<gene>
    <name evidence="1" type="primary">cmk</name>
    <name type="ordered locus">BDU_132</name>
</gene>